<dbReference type="EMBL" id="AE005174">
    <property type="protein sequence ID" value="AAG58079.1"/>
    <property type="status" value="ALT_INIT"/>
    <property type="molecule type" value="Genomic_DNA"/>
</dbReference>
<dbReference type="EMBL" id="BA000007">
    <property type="protein sequence ID" value="BAB37247.1"/>
    <property type="status" value="ALT_INIT"/>
    <property type="molecule type" value="Genomic_DNA"/>
</dbReference>
<dbReference type="PIR" id="C65080">
    <property type="entry name" value="C65080"/>
</dbReference>
<dbReference type="PIR" id="C85952">
    <property type="entry name" value="C85952"/>
</dbReference>
<dbReference type="PIR" id="H91106">
    <property type="entry name" value="H91106"/>
</dbReference>
<dbReference type="RefSeq" id="NP_311851.2">
    <property type="nucleotide sequence ID" value="NC_002695.1"/>
</dbReference>
<dbReference type="RefSeq" id="WP_001053178.1">
    <property type="nucleotide sequence ID" value="NZ_VOAI01000003.1"/>
</dbReference>
<dbReference type="SMR" id="Q8XCW1"/>
<dbReference type="STRING" id="155864.Z4293"/>
<dbReference type="GeneID" id="916451"/>
<dbReference type="KEGG" id="ece:Z4293"/>
<dbReference type="KEGG" id="ecs:ECs_3824"/>
<dbReference type="PATRIC" id="fig|386585.9.peg.3990"/>
<dbReference type="eggNOG" id="COG1678">
    <property type="taxonomic scope" value="Bacteria"/>
</dbReference>
<dbReference type="HOGENOM" id="CLU_057596_1_1_6"/>
<dbReference type="OMA" id="GAWYVVE"/>
<dbReference type="Proteomes" id="UP000000558">
    <property type="component" value="Chromosome"/>
</dbReference>
<dbReference type="Proteomes" id="UP000002519">
    <property type="component" value="Chromosome"/>
</dbReference>
<dbReference type="GO" id="GO:0005829">
    <property type="term" value="C:cytosol"/>
    <property type="evidence" value="ECO:0007669"/>
    <property type="project" value="TreeGrafter"/>
</dbReference>
<dbReference type="FunFam" id="3.30.70.1300:FF:000001">
    <property type="entry name" value="UPF0301 protein YqgE"/>
    <property type="match status" value="1"/>
</dbReference>
<dbReference type="Gene3D" id="3.40.1740.10">
    <property type="entry name" value="VC0467-like"/>
    <property type="match status" value="1"/>
</dbReference>
<dbReference type="Gene3D" id="3.30.70.1300">
    <property type="entry name" value="VC0467-like domains"/>
    <property type="match status" value="1"/>
</dbReference>
<dbReference type="HAMAP" id="MF_00758">
    <property type="entry name" value="UPF0301"/>
    <property type="match status" value="1"/>
</dbReference>
<dbReference type="InterPro" id="IPR003774">
    <property type="entry name" value="AlgH-like"/>
</dbReference>
<dbReference type="NCBIfam" id="NF001266">
    <property type="entry name" value="PRK00228.1-1"/>
    <property type="match status" value="1"/>
</dbReference>
<dbReference type="PANTHER" id="PTHR30327">
    <property type="entry name" value="UNCHARACTERIZED PROTEIN YQGE"/>
    <property type="match status" value="1"/>
</dbReference>
<dbReference type="PANTHER" id="PTHR30327:SF1">
    <property type="entry name" value="UPF0301 PROTEIN YQGE"/>
    <property type="match status" value="1"/>
</dbReference>
<dbReference type="Pfam" id="PF02622">
    <property type="entry name" value="DUF179"/>
    <property type="match status" value="1"/>
</dbReference>
<dbReference type="SUPFAM" id="SSF143456">
    <property type="entry name" value="VC0467-like"/>
    <property type="match status" value="1"/>
</dbReference>
<accession>Q8XCW1</accession>
<sequence length="187" mass="20686">MNLQHHFLIAMPALQDPIFRRSVVYICEHNTNGAMGIIVNKPLENLKIEGILEKLKITPEPRDESIRLDKPVMLGGPLAEDRGFILHTPPSNFASSIRISDNTVMTTSRDVLETLGTDKQPSDVLVALGYASWEKGQLEQEILDNAWLTAPADLNILFKTPIADRWREAAKLIGVDILTMPGVAGHA</sequence>
<gene>
    <name evidence="1" type="primary">yqgE</name>
    <name type="ordered locus">Z4293</name>
    <name type="ordered locus">ECs3824</name>
</gene>
<organism>
    <name type="scientific">Escherichia coli O157:H7</name>
    <dbReference type="NCBI Taxonomy" id="83334"/>
    <lineage>
        <taxon>Bacteria</taxon>
        <taxon>Pseudomonadati</taxon>
        <taxon>Pseudomonadota</taxon>
        <taxon>Gammaproteobacteria</taxon>
        <taxon>Enterobacterales</taxon>
        <taxon>Enterobacteriaceae</taxon>
        <taxon>Escherichia</taxon>
    </lineage>
</organism>
<keyword id="KW-1185">Reference proteome</keyword>
<proteinExistence type="inferred from homology"/>
<evidence type="ECO:0000255" key="1">
    <source>
        <dbReference type="HAMAP-Rule" id="MF_00758"/>
    </source>
</evidence>
<evidence type="ECO:0000305" key="2"/>
<name>YQGE_ECO57</name>
<comment type="similarity">
    <text evidence="1">Belongs to the UPF0301 (AlgH) family.</text>
</comment>
<comment type="sequence caution" evidence="2">
    <conflict type="erroneous initiation">
        <sequence resource="EMBL-CDS" id="AAG58079"/>
    </conflict>
</comment>
<comment type="sequence caution" evidence="2">
    <conflict type="erroneous initiation">
        <sequence resource="EMBL-CDS" id="BAB37247"/>
    </conflict>
</comment>
<reference key="1">
    <citation type="journal article" date="2001" name="Nature">
        <title>Genome sequence of enterohaemorrhagic Escherichia coli O157:H7.</title>
        <authorList>
            <person name="Perna N.T."/>
            <person name="Plunkett G. III"/>
            <person name="Burland V."/>
            <person name="Mau B."/>
            <person name="Glasner J.D."/>
            <person name="Rose D.J."/>
            <person name="Mayhew G.F."/>
            <person name="Evans P.S."/>
            <person name="Gregor J."/>
            <person name="Kirkpatrick H.A."/>
            <person name="Posfai G."/>
            <person name="Hackett J."/>
            <person name="Klink S."/>
            <person name="Boutin A."/>
            <person name="Shao Y."/>
            <person name="Miller L."/>
            <person name="Grotbeck E.J."/>
            <person name="Davis N.W."/>
            <person name="Lim A."/>
            <person name="Dimalanta E.T."/>
            <person name="Potamousis K."/>
            <person name="Apodaca J."/>
            <person name="Anantharaman T.S."/>
            <person name="Lin J."/>
            <person name="Yen G."/>
            <person name="Schwartz D.C."/>
            <person name="Welch R.A."/>
            <person name="Blattner F.R."/>
        </authorList>
    </citation>
    <scope>NUCLEOTIDE SEQUENCE [LARGE SCALE GENOMIC DNA]</scope>
    <source>
        <strain>O157:H7 / EDL933 / ATCC 700927 / EHEC</strain>
    </source>
</reference>
<reference key="2">
    <citation type="journal article" date="2001" name="DNA Res.">
        <title>Complete genome sequence of enterohemorrhagic Escherichia coli O157:H7 and genomic comparison with a laboratory strain K-12.</title>
        <authorList>
            <person name="Hayashi T."/>
            <person name="Makino K."/>
            <person name="Ohnishi M."/>
            <person name="Kurokawa K."/>
            <person name="Ishii K."/>
            <person name="Yokoyama K."/>
            <person name="Han C.-G."/>
            <person name="Ohtsubo E."/>
            <person name="Nakayama K."/>
            <person name="Murata T."/>
            <person name="Tanaka M."/>
            <person name="Tobe T."/>
            <person name="Iida T."/>
            <person name="Takami H."/>
            <person name="Honda T."/>
            <person name="Sasakawa C."/>
            <person name="Ogasawara N."/>
            <person name="Yasunaga T."/>
            <person name="Kuhara S."/>
            <person name="Shiba T."/>
            <person name="Hattori M."/>
            <person name="Shinagawa H."/>
        </authorList>
    </citation>
    <scope>NUCLEOTIDE SEQUENCE [LARGE SCALE GENOMIC DNA]</scope>
    <source>
        <strain>O157:H7 / Sakai / RIMD 0509952 / EHEC</strain>
    </source>
</reference>
<feature type="chain" id="PRO_0000214325" description="UPF0301 protein YqgE">
    <location>
        <begin position="1"/>
        <end position="187"/>
    </location>
</feature>
<protein>
    <recommendedName>
        <fullName evidence="1">UPF0301 protein YqgE</fullName>
    </recommendedName>
</protein>